<comment type="similarity">
    <text evidence="1">Belongs to the bacterial ribosomal protein bL32 family.</text>
</comment>
<reference key="1">
    <citation type="submission" date="2003-03" db="EMBL/GenBank/DDBJ databases">
        <title>The complete genome sequence of Neisseria gonorrhoeae.</title>
        <authorList>
            <person name="Lewis L.A."/>
            <person name="Gillaspy A.F."/>
            <person name="McLaughlin R.E."/>
            <person name="Gipson M."/>
            <person name="Ducey T.F."/>
            <person name="Ownbey T."/>
            <person name="Hartman K."/>
            <person name="Nydick C."/>
            <person name="Carson M.B."/>
            <person name="Vaughn J."/>
            <person name="Thomson C."/>
            <person name="Song L."/>
            <person name="Lin S."/>
            <person name="Yuan X."/>
            <person name="Najar F."/>
            <person name="Zhan M."/>
            <person name="Ren Q."/>
            <person name="Zhu H."/>
            <person name="Qi S."/>
            <person name="Kenton S.M."/>
            <person name="Lai H."/>
            <person name="White J.D."/>
            <person name="Clifton S."/>
            <person name="Roe B.A."/>
            <person name="Dyer D.W."/>
        </authorList>
    </citation>
    <scope>NUCLEOTIDE SEQUENCE [LARGE SCALE GENOMIC DNA]</scope>
    <source>
        <strain>ATCC 700825 / FA 1090</strain>
    </source>
</reference>
<evidence type="ECO:0000255" key="1">
    <source>
        <dbReference type="HAMAP-Rule" id="MF_00340"/>
    </source>
</evidence>
<evidence type="ECO:0000256" key="2">
    <source>
        <dbReference type="SAM" id="MobiDB-lite"/>
    </source>
</evidence>
<evidence type="ECO:0000305" key="3"/>
<proteinExistence type="inferred from homology"/>
<sequence length="59" mass="6533">MAVQQNKKSPSKRGMHRSHDALTAPALFVDSTTGEVHRPHHISPNGMYRGRKVVKAKGE</sequence>
<organism>
    <name type="scientific">Neisseria gonorrhoeae (strain ATCC 700825 / FA 1090)</name>
    <dbReference type="NCBI Taxonomy" id="242231"/>
    <lineage>
        <taxon>Bacteria</taxon>
        <taxon>Pseudomonadati</taxon>
        <taxon>Pseudomonadota</taxon>
        <taxon>Betaproteobacteria</taxon>
        <taxon>Neisseriales</taxon>
        <taxon>Neisseriaceae</taxon>
        <taxon>Neisseria</taxon>
    </lineage>
</organism>
<dbReference type="EMBL" id="AE004969">
    <property type="protein sequence ID" value="AAW90766.1"/>
    <property type="molecule type" value="Genomic_DNA"/>
</dbReference>
<dbReference type="RefSeq" id="WP_003687186.1">
    <property type="nucleotide sequence ID" value="NC_002946.2"/>
</dbReference>
<dbReference type="RefSeq" id="YP_209178.1">
    <property type="nucleotide sequence ID" value="NC_002946.2"/>
</dbReference>
<dbReference type="SMR" id="Q5F4X1"/>
<dbReference type="STRING" id="242231.NGO_2173"/>
<dbReference type="GeneID" id="66754502"/>
<dbReference type="KEGG" id="ngo:NGO_2173"/>
<dbReference type="PATRIC" id="fig|242231.10.peg.2627"/>
<dbReference type="HOGENOM" id="CLU_129084_2_1_4"/>
<dbReference type="Proteomes" id="UP000000535">
    <property type="component" value="Chromosome"/>
</dbReference>
<dbReference type="GO" id="GO:0015934">
    <property type="term" value="C:large ribosomal subunit"/>
    <property type="evidence" value="ECO:0007669"/>
    <property type="project" value="InterPro"/>
</dbReference>
<dbReference type="GO" id="GO:0003735">
    <property type="term" value="F:structural constituent of ribosome"/>
    <property type="evidence" value="ECO:0007669"/>
    <property type="project" value="InterPro"/>
</dbReference>
<dbReference type="GO" id="GO:0006412">
    <property type="term" value="P:translation"/>
    <property type="evidence" value="ECO:0007669"/>
    <property type="project" value="UniProtKB-UniRule"/>
</dbReference>
<dbReference type="HAMAP" id="MF_00340">
    <property type="entry name" value="Ribosomal_bL32"/>
    <property type="match status" value="1"/>
</dbReference>
<dbReference type="InterPro" id="IPR002677">
    <property type="entry name" value="Ribosomal_bL32"/>
</dbReference>
<dbReference type="InterPro" id="IPR044957">
    <property type="entry name" value="Ribosomal_bL32_bact"/>
</dbReference>
<dbReference type="InterPro" id="IPR011332">
    <property type="entry name" value="Ribosomal_zn-bd"/>
</dbReference>
<dbReference type="NCBIfam" id="TIGR01031">
    <property type="entry name" value="rpmF_bact"/>
    <property type="match status" value="1"/>
</dbReference>
<dbReference type="PANTHER" id="PTHR35534">
    <property type="entry name" value="50S RIBOSOMAL PROTEIN L32"/>
    <property type="match status" value="1"/>
</dbReference>
<dbReference type="PANTHER" id="PTHR35534:SF1">
    <property type="entry name" value="LARGE RIBOSOMAL SUBUNIT PROTEIN BL32"/>
    <property type="match status" value="1"/>
</dbReference>
<dbReference type="Pfam" id="PF01783">
    <property type="entry name" value="Ribosomal_L32p"/>
    <property type="match status" value="1"/>
</dbReference>
<dbReference type="SUPFAM" id="SSF57829">
    <property type="entry name" value="Zn-binding ribosomal proteins"/>
    <property type="match status" value="1"/>
</dbReference>
<name>RL32_NEIG1</name>
<accession>Q5F4X1</accession>
<gene>
    <name evidence="1" type="primary">rpmF</name>
    <name type="ordered locus">NGO_2173</name>
</gene>
<keyword id="KW-1185">Reference proteome</keyword>
<keyword id="KW-0687">Ribonucleoprotein</keyword>
<keyword id="KW-0689">Ribosomal protein</keyword>
<protein>
    <recommendedName>
        <fullName evidence="1">Large ribosomal subunit protein bL32</fullName>
    </recommendedName>
    <alternativeName>
        <fullName evidence="3">50S ribosomal protein L32</fullName>
    </alternativeName>
</protein>
<feature type="chain" id="PRO_0000225742" description="Large ribosomal subunit protein bL32">
    <location>
        <begin position="1"/>
        <end position="59"/>
    </location>
</feature>
<feature type="region of interest" description="Disordered" evidence="2">
    <location>
        <begin position="1"/>
        <end position="59"/>
    </location>
</feature>
<feature type="compositionally biased region" description="Basic residues" evidence="2">
    <location>
        <begin position="49"/>
        <end position="59"/>
    </location>
</feature>